<accession>P76290</accession>
<accession>O07982</accession>
<proteinExistence type="evidence at protein level"/>
<sequence length="247" mass="27777">MSHRDTLFSAPIARLGDWTFDERVAEVFPDMIQRSVPGYSNIISMIGMLAERFVQPGTQVYDLGCSLGAATLSVRRNIHHDNCKIIAIDNSPAMIERCRRHIDAYKAPTPVDVIEGDIRDIAIENASMVVLNFTLQFLEPSERQALLDKIYQGLNPGGALVLSEKFSFEDAKVGELLFNMHHDFKRANGYSELEISQKRSMLENVMLTDSVETHKARLHNAGFEHSELWFQCFNFGSLVALKAEDAA</sequence>
<keyword id="KW-0002">3D-structure</keyword>
<keyword id="KW-1185">Reference proteome</keyword>
<keyword id="KW-0949">S-adenosyl-L-methionine</keyword>
<keyword id="KW-0808">Transferase</keyword>
<dbReference type="EC" id="2.1.3.-" evidence="1 2"/>
<dbReference type="EMBL" id="U00096">
    <property type="protein sequence ID" value="AAC74940.1"/>
    <property type="molecule type" value="Genomic_DNA"/>
</dbReference>
<dbReference type="EMBL" id="AP009048">
    <property type="protein sequence ID" value="BAA15680.1"/>
    <property type="molecule type" value="Genomic_DNA"/>
</dbReference>
<dbReference type="PIR" id="F64949">
    <property type="entry name" value="F64949"/>
</dbReference>
<dbReference type="RefSeq" id="NP_416384.1">
    <property type="nucleotide sequence ID" value="NC_000913.3"/>
</dbReference>
<dbReference type="RefSeq" id="WP_000019590.1">
    <property type="nucleotide sequence ID" value="NZ_SSZK01000001.1"/>
</dbReference>
<dbReference type="PDB" id="4GEK">
    <property type="method" value="X-ray"/>
    <property type="resolution" value="1.50 A"/>
    <property type="chains" value="A/G=1-247"/>
</dbReference>
<dbReference type="PDB" id="4IWN">
    <property type="method" value="X-ray"/>
    <property type="resolution" value="1.73 A"/>
    <property type="chains" value="A/B=19-247"/>
</dbReference>
<dbReference type="PDBsum" id="4GEK"/>
<dbReference type="PDBsum" id="4IWN"/>
<dbReference type="SMR" id="P76290"/>
<dbReference type="BioGRID" id="4263500">
    <property type="interactions" value="40"/>
</dbReference>
<dbReference type="FunCoup" id="P76290">
    <property type="interactions" value="84"/>
</dbReference>
<dbReference type="IntAct" id="P76290">
    <property type="interactions" value="6"/>
</dbReference>
<dbReference type="MINT" id="P76290"/>
<dbReference type="STRING" id="511145.b1870"/>
<dbReference type="jPOST" id="P76290"/>
<dbReference type="PaxDb" id="511145-b1870"/>
<dbReference type="EnsemblBacteria" id="AAC74940">
    <property type="protein sequence ID" value="AAC74940"/>
    <property type="gene ID" value="b1870"/>
</dbReference>
<dbReference type="GeneID" id="946380"/>
<dbReference type="KEGG" id="ecj:JW1859"/>
<dbReference type="KEGG" id="eco:b1870"/>
<dbReference type="KEGG" id="ecoc:C3026_10645"/>
<dbReference type="PATRIC" id="fig|1411691.4.peg.378"/>
<dbReference type="EchoBASE" id="EB3787"/>
<dbReference type="eggNOG" id="COG2226">
    <property type="taxonomic scope" value="Bacteria"/>
</dbReference>
<dbReference type="HOGENOM" id="CLU_078475_0_0_6"/>
<dbReference type="InParanoid" id="P76290"/>
<dbReference type="OMA" id="QMIELYY"/>
<dbReference type="OrthoDB" id="9779941at2"/>
<dbReference type="PhylomeDB" id="P76290"/>
<dbReference type="BioCyc" id="EcoCyc:G7020-MONOMER"/>
<dbReference type="BioCyc" id="MetaCyc:G7020-MONOMER"/>
<dbReference type="BRENDA" id="2.1.1.229">
    <property type="organism ID" value="2026"/>
</dbReference>
<dbReference type="EvolutionaryTrace" id="P76290"/>
<dbReference type="PRO" id="PR:P76290"/>
<dbReference type="Proteomes" id="UP000000625">
    <property type="component" value="Chromosome"/>
</dbReference>
<dbReference type="GO" id="GO:0005829">
    <property type="term" value="C:cytosol"/>
    <property type="evidence" value="ECO:0000314"/>
    <property type="project" value="EcoCyc"/>
</dbReference>
<dbReference type="GO" id="GO:0016743">
    <property type="term" value="F:carboxyl- or carbamoyltransferase activity"/>
    <property type="evidence" value="ECO:0007669"/>
    <property type="project" value="UniProtKB-UniRule"/>
</dbReference>
<dbReference type="GO" id="GO:0042803">
    <property type="term" value="F:protein homodimerization activity"/>
    <property type="evidence" value="ECO:0000314"/>
    <property type="project" value="EcoCyc"/>
</dbReference>
<dbReference type="GO" id="GO:1904047">
    <property type="term" value="F:S-adenosyl-L-methionine binding"/>
    <property type="evidence" value="ECO:0007669"/>
    <property type="project" value="UniProtKB-UniRule"/>
</dbReference>
<dbReference type="GO" id="GO:0002098">
    <property type="term" value="P:tRNA wobble uridine modification"/>
    <property type="evidence" value="ECO:0000315"/>
    <property type="project" value="EcoCyc"/>
</dbReference>
<dbReference type="CDD" id="cd02440">
    <property type="entry name" value="AdoMet_MTases"/>
    <property type="match status" value="1"/>
</dbReference>
<dbReference type="FunFam" id="3.40.50.150:FF:000030">
    <property type="entry name" value="Carboxy-S-adenosyl-L-methionine synthase"/>
    <property type="match status" value="1"/>
</dbReference>
<dbReference type="Gene3D" id="3.40.50.150">
    <property type="entry name" value="Vaccinia Virus protein VP39"/>
    <property type="match status" value="1"/>
</dbReference>
<dbReference type="HAMAP" id="MF_01589">
    <property type="entry name" value="Cx_SAM_synthase"/>
    <property type="match status" value="1"/>
</dbReference>
<dbReference type="InterPro" id="IPR005271">
    <property type="entry name" value="CmoA"/>
</dbReference>
<dbReference type="InterPro" id="IPR041698">
    <property type="entry name" value="Methyltransf_25"/>
</dbReference>
<dbReference type="InterPro" id="IPR029063">
    <property type="entry name" value="SAM-dependent_MTases_sf"/>
</dbReference>
<dbReference type="NCBIfam" id="TIGR00740">
    <property type="entry name" value="carboxy-S-adenosyl-L-methionine synthase CmoA"/>
    <property type="match status" value="1"/>
</dbReference>
<dbReference type="NCBIfam" id="NF011995">
    <property type="entry name" value="PRK15451.1"/>
    <property type="match status" value="1"/>
</dbReference>
<dbReference type="PANTHER" id="PTHR43861:SF2">
    <property type="entry name" value="CARBOXY-S-ADENOSYL-L-METHIONINE SYNTHASE"/>
    <property type="match status" value="1"/>
</dbReference>
<dbReference type="PANTHER" id="PTHR43861">
    <property type="entry name" value="TRANS-ACONITATE 2-METHYLTRANSFERASE-RELATED"/>
    <property type="match status" value="1"/>
</dbReference>
<dbReference type="Pfam" id="PF13649">
    <property type="entry name" value="Methyltransf_25"/>
    <property type="match status" value="1"/>
</dbReference>
<dbReference type="PIRSF" id="PIRSF006325">
    <property type="entry name" value="MeTrfase_bac"/>
    <property type="match status" value="1"/>
</dbReference>
<dbReference type="SUPFAM" id="SSF53335">
    <property type="entry name" value="S-adenosyl-L-methionine-dependent methyltransferases"/>
    <property type="match status" value="1"/>
</dbReference>
<reference key="1">
    <citation type="journal article" date="1996" name="DNA Res.">
        <title>A 460-kb DNA sequence of the Escherichia coli K-12 genome corresponding to the 40.1-50.0 min region on the linkage map.</title>
        <authorList>
            <person name="Itoh T."/>
            <person name="Aiba H."/>
            <person name="Baba T."/>
            <person name="Fujita K."/>
            <person name="Hayashi K."/>
            <person name="Inada T."/>
            <person name="Isono K."/>
            <person name="Kasai H."/>
            <person name="Kimura S."/>
            <person name="Kitakawa M."/>
            <person name="Kitagawa M."/>
            <person name="Makino K."/>
            <person name="Miki T."/>
            <person name="Mizobuchi K."/>
            <person name="Mori H."/>
            <person name="Mori T."/>
            <person name="Motomura K."/>
            <person name="Nakade S."/>
            <person name="Nakamura Y."/>
            <person name="Nashimoto H."/>
            <person name="Nishio Y."/>
            <person name="Oshima T."/>
            <person name="Saito N."/>
            <person name="Sampei G."/>
            <person name="Seki Y."/>
            <person name="Sivasundaram S."/>
            <person name="Tagami H."/>
            <person name="Takeda J."/>
            <person name="Takemoto K."/>
            <person name="Wada C."/>
            <person name="Yamamoto Y."/>
            <person name="Horiuchi T."/>
        </authorList>
    </citation>
    <scope>NUCLEOTIDE SEQUENCE [LARGE SCALE GENOMIC DNA]</scope>
    <source>
        <strain>K12 / W3110 / ATCC 27325 / DSM 5911</strain>
    </source>
</reference>
<reference key="2">
    <citation type="journal article" date="1997" name="Science">
        <title>The complete genome sequence of Escherichia coli K-12.</title>
        <authorList>
            <person name="Blattner F.R."/>
            <person name="Plunkett G. III"/>
            <person name="Bloch C.A."/>
            <person name="Perna N.T."/>
            <person name="Burland V."/>
            <person name="Riley M."/>
            <person name="Collado-Vides J."/>
            <person name="Glasner J.D."/>
            <person name="Rode C.K."/>
            <person name="Mayhew G.F."/>
            <person name="Gregor J."/>
            <person name="Davis N.W."/>
            <person name="Kirkpatrick H.A."/>
            <person name="Goeden M.A."/>
            <person name="Rose D.J."/>
            <person name="Mau B."/>
            <person name="Shao Y."/>
        </authorList>
    </citation>
    <scope>NUCLEOTIDE SEQUENCE [LARGE SCALE GENOMIC DNA]</scope>
    <source>
        <strain>K12 / MG1655 / ATCC 47076</strain>
    </source>
</reference>
<reference key="3">
    <citation type="journal article" date="2006" name="Mol. Syst. Biol.">
        <title>Highly accurate genome sequences of Escherichia coli K-12 strains MG1655 and W3110.</title>
        <authorList>
            <person name="Hayashi K."/>
            <person name="Morooka N."/>
            <person name="Yamamoto Y."/>
            <person name="Fujita K."/>
            <person name="Isono K."/>
            <person name="Choi S."/>
            <person name="Ohtsubo E."/>
            <person name="Baba T."/>
            <person name="Wanner B.L."/>
            <person name="Mori H."/>
            <person name="Horiuchi T."/>
        </authorList>
    </citation>
    <scope>NUCLEOTIDE SEQUENCE [LARGE SCALE GENOMIC DNA]</scope>
    <source>
        <strain>K12 / W3110 / ATCC 27325 / DSM 5911</strain>
    </source>
</reference>
<reference evidence="8" key="4">
    <citation type="journal article" date="2013" name="Acta Crystallogr. D">
        <title>S-adenosyl-S-carboxymethyl-L-homocysteine: a novel cofactor found in the putative tRNA-modifying enzyme CmoA.</title>
        <authorList>
            <person name="Byrne R.T."/>
            <person name="Whelan F."/>
            <person name="Aller P."/>
            <person name="Bird L.E."/>
            <person name="Dowle A."/>
            <person name="Lobley C.M."/>
            <person name="Reddivari Y."/>
            <person name="Nettleship J.E."/>
            <person name="Owens R.J."/>
            <person name="Antson A.A."/>
            <person name="Waterman D.G."/>
        </authorList>
    </citation>
    <scope>X-RAY CRYSTALLOGRAPHY (1.73 ANGSTROMS) OF 19-247 IN COMPLEX WITH CARBOXY-S-ADENOSYL-METHIONINE</scope>
    <scope>SUBUNIT</scope>
</reference>
<reference evidence="7" key="5">
    <citation type="journal article" date="2013" name="Nature">
        <title>Structure-guided discovery of the metabolite carboxy-SAM that modulates tRNA function.</title>
        <authorList>
            <person name="Kim J."/>
            <person name="Xiao H."/>
            <person name="Bonanno J.B."/>
            <person name="Kalyanaraman C."/>
            <person name="Brown S."/>
            <person name="Tang X."/>
            <person name="Al-Obaidi N.F."/>
            <person name="Patskovsky Y."/>
            <person name="Babbitt P.C."/>
            <person name="Jacobson M.P."/>
            <person name="Lee Y.S."/>
            <person name="Almo S.C."/>
        </authorList>
    </citation>
    <scope>X-RAY CRYSTALLOGRAPHY (1.50 ANGSTROMS) IN COMPLEX WITH CARBOXY-S-ADENOSYL-METHIONINE</scope>
    <scope>FUNCTION</scope>
    <scope>CATALYTIC ACTIVITY</scope>
    <scope>MUTAGENESIS OF ASP-89</scope>
</reference>
<comment type="function">
    <text evidence="1 2">Catalyzes the conversion of S-adenosyl-L-methionine (SAM) to carboxy-S-adenosyl-L-methionine (Cx-SAM).</text>
</comment>
<comment type="catalytic activity">
    <reaction evidence="1 2">
        <text>prephenate + S-adenosyl-L-methionine = carboxy-S-adenosyl-L-methionine + 3-phenylpyruvate + H2O</text>
        <dbReference type="Rhea" id="RHEA:51692"/>
        <dbReference type="ChEBI" id="CHEBI:15377"/>
        <dbReference type="ChEBI" id="CHEBI:18005"/>
        <dbReference type="ChEBI" id="CHEBI:29934"/>
        <dbReference type="ChEBI" id="CHEBI:59789"/>
        <dbReference type="ChEBI" id="CHEBI:134278"/>
    </reaction>
</comment>
<comment type="subunit">
    <text evidence="1 3">Homodimer.</text>
</comment>
<comment type="miscellaneous">
    <text evidence="2">Mechanistic analyses show the involvement of a unique ylide intermediate as the carboxyl acceptor in the conversion of SAM to Cx-SAM.</text>
</comment>
<comment type="similarity">
    <text evidence="1 6">Belongs to the class I-like SAM-binding methyltransferase superfamily. Cx-SAM synthase family.</text>
</comment>
<name>CMOA_ECOLI</name>
<evidence type="ECO:0000255" key="1">
    <source>
        <dbReference type="HAMAP-Rule" id="MF_01589"/>
    </source>
</evidence>
<evidence type="ECO:0000269" key="2">
    <source>
    </source>
</evidence>
<evidence type="ECO:0000269" key="3">
    <source>
    </source>
</evidence>
<evidence type="ECO:0000303" key="4">
    <source>
    </source>
</evidence>
<evidence type="ECO:0000303" key="5">
    <source>
    </source>
</evidence>
<evidence type="ECO:0000305" key="6"/>
<evidence type="ECO:0007744" key="7">
    <source>
        <dbReference type="PDB" id="4GEK"/>
    </source>
</evidence>
<evidence type="ECO:0007744" key="8">
    <source>
        <dbReference type="PDB" id="4IWN"/>
    </source>
</evidence>
<evidence type="ECO:0007829" key="9">
    <source>
        <dbReference type="PDB" id="4IWN"/>
    </source>
</evidence>
<feature type="chain" id="PRO_0000169083" description="Carboxy-S-adenosyl-L-methionine synthase">
    <location>
        <begin position="1"/>
        <end position="247"/>
    </location>
</feature>
<feature type="binding site" evidence="1 2 3">
    <location>
        <position position="39"/>
    </location>
    <ligand>
        <name>S-adenosyl-L-methionine</name>
        <dbReference type="ChEBI" id="CHEBI:59789"/>
    </ligand>
</feature>
<feature type="binding site" evidence="1 2 3">
    <location>
        <begin position="64"/>
        <end position="66"/>
    </location>
    <ligand>
        <name>S-adenosyl-L-methionine</name>
        <dbReference type="ChEBI" id="CHEBI:59789"/>
    </ligand>
</feature>
<feature type="binding site" evidence="1 2 3">
    <location>
        <begin position="89"/>
        <end position="90"/>
    </location>
    <ligand>
        <name>S-adenosyl-L-methionine</name>
        <dbReference type="ChEBI" id="CHEBI:59789"/>
    </ligand>
</feature>
<feature type="binding site" evidence="1 2 3">
    <location>
        <begin position="117"/>
        <end position="118"/>
    </location>
    <ligand>
        <name>S-adenosyl-L-methionine</name>
        <dbReference type="ChEBI" id="CHEBI:59789"/>
    </ligand>
</feature>
<feature type="binding site" evidence="1 2 3">
    <location>
        <position position="132"/>
    </location>
    <ligand>
        <name>S-adenosyl-L-methionine</name>
        <dbReference type="ChEBI" id="CHEBI:59789"/>
    </ligand>
</feature>
<feature type="binding site" evidence="1 2 3">
    <location>
        <position position="199"/>
    </location>
    <ligand>
        <name>S-adenosyl-L-methionine</name>
        <dbReference type="ChEBI" id="CHEBI:59789"/>
    </ligand>
</feature>
<feature type="mutagenesis site" description="Lack of activity." evidence="2">
    <original>D</original>
    <variation>L</variation>
    <location>
        <position position="89"/>
    </location>
</feature>
<feature type="helix" evidence="9">
    <location>
        <begin position="20"/>
        <end position="35"/>
    </location>
</feature>
<feature type="helix" evidence="9">
    <location>
        <begin position="39"/>
        <end position="53"/>
    </location>
</feature>
<feature type="strand" evidence="9">
    <location>
        <begin position="59"/>
        <end position="64"/>
    </location>
</feature>
<feature type="turn" evidence="9">
    <location>
        <begin position="66"/>
        <end position="68"/>
    </location>
</feature>
<feature type="helix" evidence="9">
    <location>
        <begin position="69"/>
        <end position="76"/>
    </location>
</feature>
<feature type="strand" evidence="9">
    <location>
        <begin position="80"/>
        <end position="82"/>
    </location>
</feature>
<feature type="strand" evidence="9">
    <location>
        <begin position="84"/>
        <end position="90"/>
    </location>
</feature>
<feature type="helix" evidence="9">
    <location>
        <begin position="92"/>
        <end position="103"/>
    </location>
</feature>
<feature type="strand" evidence="9">
    <location>
        <begin position="111"/>
        <end position="116"/>
    </location>
</feature>
<feature type="turn" evidence="9">
    <location>
        <begin position="118"/>
        <end position="120"/>
    </location>
</feature>
<feature type="strand" evidence="9">
    <location>
        <begin position="125"/>
        <end position="133"/>
    </location>
</feature>
<feature type="helix" evidence="9">
    <location>
        <begin position="135"/>
        <end position="137"/>
    </location>
</feature>
<feature type="helix" evidence="9">
    <location>
        <begin position="140"/>
        <end position="153"/>
    </location>
</feature>
<feature type="strand" evidence="9">
    <location>
        <begin position="154"/>
        <end position="166"/>
    </location>
</feature>
<feature type="helix" evidence="9">
    <location>
        <begin position="171"/>
        <end position="187"/>
    </location>
</feature>
<feature type="helix" evidence="9">
    <location>
        <begin position="190"/>
        <end position="192"/>
    </location>
</feature>
<feature type="helix" evidence="9">
    <location>
        <begin position="196"/>
        <end position="203"/>
    </location>
</feature>
<feature type="helix" evidence="9">
    <location>
        <begin position="211"/>
        <end position="221"/>
    </location>
</feature>
<feature type="strand" evidence="9">
    <location>
        <begin position="224"/>
        <end position="232"/>
    </location>
</feature>
<feature type="strand" evidence="9">
    <location>
        <begin position="235"/>
        <end position="241"/>
    </location>
</feature>
<protein>
    <recommendedName>
        <fullName evidence="1 6">Carboxy-S-adenosyl-L-methionine synthase</fullName>
        <shortName evidence="1 4">Cx-SAM synthase</shortName>
        <ecNumber evidence="1 2">2.1.3.-</ecNumber>
    </recommendedName>
</protein>
<organism>
    <name type="scientific">Escherichia coli (strain K12)</name>
    <dbReference type="NCBI Taxonomy" id="83333"/>
    <lineage>
        <taxon>Bacteria</taxon>
        <taxon>Pseudomonadati</taxon>
        <taxon>Pseudomonadota</taxon>
        <taxon>Gammaproteobacteria</taxon>
        <taxon>Enterobacterales</taxon>
        <taxon>Enterobacteriaceae</taxon>
        <taxon>Escherichia</taxon>
    </lineage>
</organism>
<gene>
    <name evidence="1 4 5" type="primary">cmoA</name>
    <name type="synonym">yecO</name>
    <name type="ordered locus">b1870</name>
    <name type="ordered locus">JW1859</name>
</gene>